<organism>
    <name type="scientific">Bacillus cereus (strain AH187)</name>
    <dbReference type="NCBI Taxonomy" id="405534"/>
    <lineage>
        <taxon>Bacteria</taxon>
        <taxon>Bacillati</taxon>
        <taxon>Bacillota</taxon>
        <taxon>Bacilli</taxon>
        <taxon>Bacillales</taxon>
        <taxon>Bacillaceae</taxon>
        <taxon>Bacillus</taxon>
        <taxon>Bacillus cereus group</taxon>
    </lineage>
</organism>
<evidence type="ECO:0000255" key="1">
    <source>
        <dbReference type="HAMAP-Rule" id="MF_00532"/>
    </source>
</evidence>
<evidence type="ECO:0000305" key="2"/>
<comment type="similarity">
    <text evidence="1">Belongs to the universal ribosomal protein uS9 family.</text>
</comment>
<protein>
    <recommendedName>
        <fullName evidence="1">Small ribosomal subunit protein uS9</fullName>
    </recommendedName>
    <alternativeName>
        <fullName evidence="2">30S ribosomal protein S9</fullName>
    </alternativeName>
</protein>
<keyword id="KW-0687">Ribonucleoprotein</keyword>
<keyword id="KW-0689">Ribosomal protein</keyword>
<reference key="1">
    <citation type="submission" date="2008-10" db="EMBL/GenBank/DDBJ databases">
        <title>Genome sequence of Bacillus cereus AH187.</title>
        <authorList>
            <person name="Dodson R.J."/>
            <person name="Durkin A.S."/>
            <person name="Rosovitz M.J."/>
            <person name="Rasko D.A."/>
            <person name="Kolsto A.B."/>
            <person name="Okstad O.A."/>
            <person name="Ravel J."/>
            <person name="Sutton G."/>
        </authorList>
    </citation>
    <scope>NUCLEOTIDE SEQUENCE [LARGE SCALE GENOMIC DNA]</scope>
    <source>
        <strain>AH187</strain>
    </source>
</reference>
<feature type="chain" id="PRO_1000128077" description="Small ribosomal subunit protein uS9">
    <location>
        <begin position="1"/>
        <end position="130"/>
    </location>
</feature>
<sequence>MAQVQYYGTGRRKSSVARVRLVPGEGRVIINGRDFENYIPFAALREVVKQPLVATETLGNYDVLVNVNGGGYTGQAGAIRHGISRALLKADPEYRLTLKRAGLLTRDARMKERKKYGLKGARRAPQFSKR</sequence>
<accession>B7HQX8</accession>
<name>RS9_BACC7</name>
<gene>
    <name evidence="1" type="primary">rpsI</name>
    <name type="ordered locus">BCAH187_A0176</name>
</gene>
<proteinExistence type="inferred from homology"/>
<dbReference type="EMBL" id="CP001177">
    <property type="protein sequence ID" value="ACJ82555.1"/>
    <property type="molecule type" value="Genomic_DNA"/>
</dbReference>
<dbReference type="SMR" id="B7HQX8"/>
<dbReference type="KEGG" id="bcr:BCAH187_A0176"/>
<dbReference type="HOGENOM" id="CLU_046483_2_1_9"/>
<dbReference type="Proteomes" id="UP000002214">
    <property type="component" value="Chromosome"/>
</dbReference>
<dbReference type="GO" id="GO:0022627">
    <property type="term" value="C:cytosolic small ribosomal subunit"/>
    <property type="evidence" value="ECO:0007669"/>
    <property type="project" value="TreeGrafter"/>
</dbReference>
<dbReference type="GO" id="GO:0003723">
    <property type="term" value="F:RNA binding"/>
    <property type="evidence" value="ECO:0007669"/>
    <property type="project" value="TreeGrafter"/>
</dbReference>
<dbReference type="GO" id="GO:0003735">
    <property type="term" value="F:structural constituent of ribosome"/>
    <property type="evidence" value="ECO:0007669"/>
    <property type="project" value="InterPro"/>
</dbReference>
<dbReference type="GO" id="GO:0006412">
    <property type="term" value="P:translation"/>
    <property type="evidence" value="ECO:0007669"/>
    <property type="project" value="UniProtKB-UniRule"/>
</dbReference>
<dbReference type="FunFam" id="3.30.230.10:FF:000001">
    <property type="entry name" value="30S ribosomal protein S9"/>
    <property type="match status" value="1"/>
</dbReference>
<dbReference type="Gene3D" id="3.30.230.10">
    <property type="match status" value="1"/>
</dbReference>
<dbReference type="HAMAP" id="MF_00532_B">
    <property type="entry name" value="Ribosomal_uS9_B"/>
    <property type="match status" value="1"/>
</dbReference>
<dbReference type="InterPro" id="IPR020568">
    <property type="entry name" value="Ribosomal_Su5_D2-typ_SF"/>
</dbReference>
<dbReference type="InterPro" id="IPR000754">
    <property type="entry name" value="Ribosomal_uS9"/>
</dbReference>
<dbReference type="InterPro" id="IPR023035">
    <property type="entry name" value="Ribosomal_uS9_bac/plastid"/>
</dbReference>
<dbReference type="InterPro" id="IPR020574">
    <property type="entry name" value="Ribosomal_uS9_CS"/>
</dbReference>
<dbReference type="InterPro" id="IPR014721">
    <property type="entry name" value="Ribsml_uS5_D2-typ_fold_subgr"/>
</dbReference>
<dbReference type="NCBIfam" id="NF001099">
    <property type="entry name" value="PRK00132.1"/>
    <property type="match status" value="1"/>
</dbReference>
<dbReference type="PANTHER" id="PTHR21569">
    <property type="entry name" value="RIBOSOMAL PROTEIN S9"/>
    <property type="match status" value="1"/>
</dbReference>
<dbReference type="PANTHER" id="PTHR21569:SF1">
    <property type="entry name" value="SMALL RIBOSOMAL SUBUNIT PROTEIN US9M"/>
    <property type="match status" value="1"/>
</dbReference>
<dbReference type="Pfam" id="PF00380">
    <property type="entry name" value="Ribosomal_S9"/>
    <property type="match status" value="1"/>
</dbReference>
<dbReference type="SUPFAM" id="SSF54211">
    <property type="entry name" value="Ribosomal protein S5 domain 2-like"/>
    <property type="match status" value="1"/>
</dbReference>
<dbReference type="PROSITE" id="PS00360">
    <property type="entry name" value="RIBOSOMAL_S9"/>
    <property type="match status" value="1"/>
</dbReference>